<reference key="1">
    <citation type="journal article" date="2004" name="Nature">
        <title>Genome sequence of Silicibacter pomeroyi reveals adaptations to the marine environment.</title>
        <authorList>
            <person name="Moran M.A."/>
            <person name="Buchan A."/>
            <person name="Gonzalez J.M."/>
            <person name="Heidelberg J.F."/>
            <person name="Whitman W.B."/>
            <person name="Kiene R.P."/>
            <person name="Henriksen J.R."/>
            <person name="King G.M."/>
            <person name="Belas R."/>
            <person name="Fuqua C."/>
            <person name="Brinkac L.M."/>
            <person name="Lewis M."/>
            <person name="Johri S."/>
            <person name="Weaver B."/>
            <person name="Pai G."/>
            <person name="Eisen J.A."/>
            <person name="Rahe E."/>
            <person name="Sheldon W.M."/>
            <person name="Ye W."/>
            <person name="Miller T.R."/>
            <person name="Carlton J."/>
            <person name="Rasko D.A."/>
            <person name="Paulsen I.T."/>
            <person name="Ren Q."/>
            <person name="Daugherty S.C."/>
            <person name="DeBoy R.T."/>
            <person name="Dodson R.J."/>
            <person name="Durkin A.S."/>
            <person name="Madupu R."/>
            <person name="Nelson W.C."/>
            <person name="Sullivan S.A."/>
            <person name="Rosovitz M.J."/>
            <person name="Haft D.H."/>
            <person name="Selengut J."/>
            <person name="Ward N."/>
        </authorList>
    </citation>
    <scope>NUCLEOTIDE SEQUENCE [LARGE SCALE GENOMIC DNA]</scope>
    <source>
        <strain>ATCC 700808 / DSM 15171 / DSS-3</strain>
    </source>
</reference>
<reference key="2">
    <citation type="journal article" date="2014" name="Stand. Genomic Sci.">
        <title>An updated genome annotation for the model marine bacterium Ruegeria pomeroyi DSS-3.</title>
        <authorList>
            <person name="Rivers A.R."/>
            <person name="Smith C.B."/>
            <person name="Moran M.A."/>
        </authorList>
    </citation>
    <scope>GENOME REANNOTATION</scope>
    <source>
        <strain>ATCC 700808 / DSM 15171 / DSS-3</strain>
    </source>
</reference>
<organism>
    <name type="scientific">Ruegeria pomeroyi (strain ATCC 700808 / DSM 15171 / DSS-3)</name>
    <name type="common">Silicibacter pomeroyi</name>
    <dbReference type="NCBI Taxonomy" id="246200"/>
    <lineage>
        <taxon>Bacteria</taxon>
        <taxon>Pseudomonadati</taxon>
        <taxon>Pseudomonadota</taxon>
        <taxon>Alphaproteobacteria</taxon>
        <taxon>Rhodobacterales</taxon>
        <taxon>Roseobacteraceae</taxon>
        <taxon>Ruegeria</taxon>
    </lineage>
</organism>
<keyword id="KW-0963">Cytoplasm</keyword>
<keyword id="KW-0460">Magnesium</keyword>
<keyword id="KW-0479">Metal-binding</keyword>
<keyword id="KW-0548">Nucleotidyltransferase</keyword>
<keyword id="KW-1185">Reference proteome</keyword>
<keyword id="KW-0694">RNA-binding</keyword>
<keyword id="KW-0808">Transferase</keyword>
<evidence type="ECO:0000255" key="1">
    <source>
        <dbReference type="HAMAP-Rule" id="MF_01595"/>
    </source>
</evidence>
<sequence length="714" mass="77112">MFDVTTKSMQWGEETLTLESGKIARQADGSVVATLGETRVMANVTFAREQKPGQDFFPLTVHYQEKYYAAGKVPGGFFKREARPTEKETLTARLIDRPIRPLFVPGFKNEVLVMCTVLSHDLVNDPDIVAMIAASAALTISGVPFMGPIAGCRVGYVDGEYVLNPTVDDMQDLRLNPEQRLDLVVAGTKDAVMMVESEAYELTEAEMLGAVTFAHAQIQPVVDLIVSFAEQCAKEPFDFTPPDYSDLYAAVKAAGEEQMRAAFAITDKQERTAAVAAAREAIKAALTEEQLADGNLGSALKKLEAGILRGDVVKGGKRIDGRDTTTVRPIVAETGLLPRTHGSALFTRGETQGLVVTTLGTGDDEQFIDALHGNFKSNFLLHYNFPPYSVGEVGRVGSPGRREIGHGKLAWRALQAVLPAPTDFPYTIRVVSEITESNGSSSMASVCGGSLSMMDAGVPLKSAVAGVAMGLILEDDGSYAVLTDILGDEDHLGDMDFKVAGTENGITSLQMDIKVAGITPEIMEKALSQAKDGRMHILAEMNKALSGAADFSVHAPRIETMQIPTDKIREVIGSGGKVIREIVEVSGAKVDINDDGIIKIASPNGDSIKKAYDMIWSIVAEPEEGQVYTGKVVKIVDFGAFVNFFGKRDGLVHVSQIENRRLNHPSDVLKEGQEVKVKLLGFDDRGKVRLSMKVVDQETGEEIVPEKKEASEAE</sequence>
<proteinExistence type="inferred from homology"/>
<protein>
    <recommendedName>
        <fullName evidence="1">Polyribonucleotide nucleotidyltransferase</fullName>
        <ecNumber evidence="1">2.7.7.8</ecNumber>
    </recommendedName>
    <alternativeName>
        <fullName evidence="1">Polynucleotide phosphorylase</fullName>
        <shortName evidence="1">PNPase</shortName>
    </alternativeName>
</protein>
<gene>
    <name evidence="1" type="primary">pnp</name>
    <name type="ordered locus">SPO3389</name>
</gene>
<dbReference type="EC" id="2.7.7.8" evidence="1"/>
<dbReference type="EMBL" id="CP000031">
    <property type="protein sequence ID" value="AAV96616.1"/>
    <property type="molecule type" value="Genomic_DNA"/>
</dbReference>
<dbReference type="RefSeq" id="WP_011049072.1">
    <property type="nucleotide sequence ID" value="NC_003911.12"/>
</dbReference>
<dbReference type="SMR" id="Q5LN23"/>
<dbReference type="STRING" id="246200.SPO3389"/>
<dbReference type="PaxDb" id="246200-SPO3389"/>
<dbReference type="KEGG" id="sil:SPO3389"/>
<dbReference type="eggNOG" id="COG1185">
    <property type="taxonomic scope" value="Bacteria"/>
</dbReference>
<dbReference type="HOGENOM" id="CLU_004217_2_2_5"/>
<dbReference type="OrthoDB" id="9804305at2"/>
<dbReference type="Proteomes" id="UP000001023">
    <property type="component" value="Chromosome"/>
</dbReference>
<dbReference type="GO" id="GO:0005829">
    <property type="term" value="C:cytosol"/>
    <property type="evidence" value="ECO:0007669"/>
    <property type="project" value="TreeGrafter"/>
</dbReference>
<dbReference type="GO" id="GO:0000175">
    <property type="term" value="F:3'-5'-RNA exonuclease activity"/>
    <property type="evidence" value="ECO:0007669"/>
    <property type="project" value="TreeGrafter"/>
</dbReference>
<dbReference type="GO" id="GO:0000287">
    <property type="term" value="F:magnesium ion binding"/>
    <property type="evidence" value="ECO:0007669"/>
    <property type="project" value="UniProtKB-UniRule"/>
</dbReference>
<dbReference type="GO" id="GO:0004654">
    <property type="term" value="F:polyribonucleotide nucleotidyltransferase activity"/>
    <property type="evidence" value="ECO:0007669"/>
    <property type="project" value="UniProtKB-UniRule"/>
</dbReference>
<dbReference type="GO" id="GO:0003723">
    <property type="term" value="F:RNA binding"/>
    <property type="evidence" value="ECO:0007669"/>
    <property type="project" value="UniProtKB-UniRule"/>
</dbReference>
<dbReference type="GO" id="GO:0006402">
    <property type="term" value="P:mRNA catabolic process"/>
    <property type="evidence" value="ECO:0007669"/>
    <property type="project" value="UniProtKB-UniRule"/>
</dbReference>
<dbReference type="GO" id="GO:0006396">
    <property type="term" value="P:RNA processing"/>
    <property type="evidence" value="ECO:0007669"/>
    <property type="project" value="InterPro"/>
</dbReference>
<dbReference type="CDD" id="cd02393">
    <property type="entry name" value="KH-I_PNPase"/>
    <property type="match status" value="1"/>
</dbReference>
<dbReference type="CDD" id="cd11363">
    <property type="entry name" value="RNase_PH_PNPase_1"/>
    <property type="match status" value="1"/>
</dbReference>
<dbReference type="CDD" id="cd11364">
    <property type="entry name" value="RNase_PH_PNPase_2"/>
    <property type="match status" value="1"/>
</dbReference>
<dbReference type="CDD" id="cd04472">
    <property type="entry name" value="S1_PNPase"/>
    <property type="match status" value="1"/>
</dbReference>
<dbReference type="FunFam" id="2.40.50.140:FF:000107">
    <property type="entry name" value="Polyribonucleotide nucleotidyltransferase"/>
    <property type="match status" value="1"/>
</dbReference>
<dbReference type="FunFam" id="3.30.1370.10:FF:000001">
    <property type="entry name" value="Polyribonucleotide nucleotidyltransferase"/>
    <property type="match status" value="1"/>
</dbReference>
<dbReference type="FunFam" id="3.30.230.70:FF:000001">
    <property type="entry name" value="Polyribonucleotide nucleotidyltransferase"/>
    <property type="match status" value="1"/>
</dbReference>
<dbReference type="FunFam" id="3.30.230.70:FF:000002">
    <property type="entry name" value="Polyribonucleotide nucleotidyltransferase"/>
    <property type="match status" value="1"/>
</dbReference>
<dbReference type="Gene3D" id="3.30.230.70">
    <property type="entry name" value="GHMP Kinase, N-terminal domain"/>
    <property type="match status" value="2"/>
</dbReference>
<dbReference type="Gene3D" id="3.30.1370.10">
    <property type="entry name" value="K Homology domain, type 1"/>
    <property type="match status" value="1"/>
</dbReference>
<dbReference type="Gene3D" id="2.40.50.140">
    <property type="entry name" value="Nucleic acid-binding proteins"/>
    <property type="match status" value="1"/>
</dbReference>
<dbReference type="HAMAP" id="MF_01595">
    <property type="entry name" value="PNPase"/>
    <property type="match status" value="1"/>
</dbReference>
<dbReference type="InterPro" id="IPR001247">
    <property type="entry name" value="ExoRNase_PH_dom1"/>
</dbReference>
<dbReference type="InterPro" id="IPR015847">
    <property type="entry name" value="ExoRNase_PH_dom2"/>
</dbReference>
<dbReference type="InterPro" id="IPR036345">
    <property type="entry name" value="ExoRNase_PH_dom2_sf"/>
</dbReference>
<dbReference type="InterPro" id="IPR004087">
    <property type="entry name" value="KH_dom"/>
</dbReference>
<dbReference type="InterPro" id="IPR004088">
    <property type="entry name" value="KH_dom_type_1"/>
</dbReference>
<dbReference type="InterPro" id="IPR036612">
    <property type="entry name" value="KH_dom_type_1_sf"/>
</dbReference>
<dbReference type="InterPro" id="IPR012340">
    <property type="entry name" value="NA-bd_OB-fold"/>
</dbReference>
<dbReference type="InterPro" id="IPR012162">
    <property type="entry name" value="PNPase"/>
</dbReference>
<dbReference type="InterPro" id="IPR027408">
    <property type="entry name" value="PNPase/RNase_PH_dom_sf"/>
</dbReference>
<dbReference type="InterPro" id="IPR015848">
    <property type="entry name" value="PNPase_PH_RNA-bd_bac/org-type"/>
</dbReference>
<dbReference type="InterPro" id="IPR036456">
    <property type="entry name" value="PNPase_PH_RNA-bd_sf"/>
</dbReference>
<dbReference type="InterPro" id="IPR020568">
    <property type="entry name" value="Ribosomal_Su5_D2-typ_SF"/>
</dbReference>
<dbReference type="InterPro" id="IPR003029">
    <property type="entry name" value="S1_domain"/>
</dbReference>
<dbReference type="NCBIfam" id="TIGR03591">
    <property type="entry name" value="polynuc_phos"/>
    <property type="match status" value="1"/>
</dbReference>
<dbReference type="NCBIfam" id="NF008805">
    <property type="entry name" value="PRK11824.1"/>
    <property type="match status" value="1"/>
</dbReference>
<dbReference type="PANTHER" id="PTHR11252">
    <property type="entry name" value="POLYRIBONUCLEOTIDE NUCLEOTIDYLTRANSFERASE"/>
    <property type="match status" value="1"/>
</dbReference>
<dbReference type="PANTHER" id="PTHR11252:SF0">
    <property type="entry name" value="POLYRIBONUCLEOTIDE NUCLEOTIDYLTRANSFERASE 1, MITOCHONDRIAL"/>
    <property type="match status" value="1"/>
</dbReference>
<dbReference type="Pfam" id="PF00013">
    <property type="entry name" value="KH_1"/>
    <property type="match status" value="1"/>
</dbReference>
<dbReference type="Pfam" id="PF03726">
    <property type="entry name" value="PNPase"/>
    <property type="match status" value="1"/>
</dbReference>
<dbReference type="Pfam" id="PF01138">
    <property type="entry name" value="RNase_PH"/>
    <property type="match status" value="2"/>
</dbReference>
<dbReference type="Pfam" id="PF03725">
    <property type="entry name" value="RNase_PH_C"/>
    <property type="match status" value="2"/>
</dbReference>
<dbReference type="Pfam" id="PF00575">
    <property type="entry name" value="S1"/>
    <property type="match status" value="1"/>
</dbReference>
<dbReference type="PIRSF" id="PIRSF005499">
    <property type="entry name" value="PNPase"/>
    <property type="match status" value="1"/>
</dbReference>
<dbReference type="SMART" id="SM00322">
    <property type="entry name" value="KH"/>
    <property type="match status" value="1"/>
</dbReference>
<dbReference type="SMART" id="SM00316">
    <property type="entry name" value="S1"/>
    <property type="match status" value="1"/>
</dbReference>
<dbReference type="SUPFAM" id="SSF54791">
    <property type="entry name" value="Eukaryotic type KH-domain (KH-domain type I)"/>
    <property type="match status" value="1"/>
</dbReference>
<dbReference type="SUPFAM" id="SSF50249">
    <property type="entry name" value="Nucleic acid-binding proteins"/>
    <property type="match status" value="1"/>
</dbReference>
<dbReference type="SUPFAM" id="SSF46915">
    <property type="entry name" value="Polynucleotide phosphorylase/guanosine pentaphosphate synthase (PNPase/GPSI), domain 3"/>
    <property type="match status" value="1"/>
</dbReference>
<dbReference type="SUPFAM" id="SSF55666">
    <property type="entry name" value="Ribonuclease PH domain 2-like"/>
    <property type="match status" value="2"/>
</dbReference>
<dbReference type="SUPFAM" id="SSF54211">
    <property type="entry name" value="Ribosomal protein S5 domain 2-like"/>
    <property type="match status" value="2"/>
</dbReference>
<dbReference type="PROSITE" id="PS50084">
    <property type="entry name" value="KH_TYPE_1"/>
    <property type="match status" value="1"/>
</dbReference>
<dbReference type="PROSITE" id="PS50126">
    <property type="entry name" value="S1"/>
    <property type="match status" value="1"/>
</dbReference>
<feature type="chain" id="PRO_0000329853" description="Polyribonucleotide nucleotidyltransferase">
    <location>
        <begin position="1"/>
        <end position="714"/>
    </location>
</feature>
<feature type="domain" description="KH" evidence="1">
    <location>
        <begin position="556"/>
        <end position="615"/>
    </location>
</feature>
<feature type="domain" description="S1 motif" evidence="1">
    <location>
        <begin position="625"/>
        <end position="693"/>
    </location>
</feature>
<feature type="binding site" evidence="1">
    <location>
        <position position="490"/>
    </location>
    <ligand>
        <name>Mg(2+)</name>
        <dbReference type="ChEBI" id="CHEBI:18420"/>
    </ligand>
</feature>
<feature type="binding site" evidence="1">
    <location>
        <position position="496"/>
    </location>
    <ligand>
        <name>Mg(2+)</name>
        <dbReference type="ChEBI" id="CHEBI:18420"/>
    </ligand>
</feature>
<name>PNP_RUEPO</name>
<comment type="function">
    <text evidence="1">Involved in mRNA degradation. Catalyzes the phosphorolysis of single-stranded polyribonucleotides processively in the 3'- to 5'-direction.</text>
</comment>
<comment type="catalytic activity">
    <reaction evidence="1">
        <text>RNA(n+1) + phosphate = RNA(n) + a ribonucleoside 5'-diphosphate</text>
        <dbReference type="Rhea" id="RHEA:22096"/>
        <dbReference type="Rhea" id="RHEA-COMP:14527"/>
        <dbReference type="Rhea" id="RHEA-COMP:17342"/>
        <dbReference type="ChEBI" id="CHEBI:43474"/>
        <dbReference type="ChEBI" id="CHEBI:57930"/>
        <dbReference type="ChEBI" id="CHEBI:140395"/>
        <dbReference type="EC" id="2.7.7.8"/>
    </reaction>
</comment>
<comment type="cofactor">
    <cofactor evidence="1">
        <name>Mg(2+)</name>
        <dbReference type="ChEBI" id="CHEBI:18420"/>
    </cofactor>
</comment>
<comment type="subcellular location">
    <subcellularLocation>
        <location evidence="1">Cytoplasm</location>
    </subcellularLocation>
</comment>
<comment type="similarity">
    <text evidence="1">Belongs to the polyribonucleotide nucleotidyltransferase family.</text>
</comment>
<accession>Q5LN23</accession>